<sequence>MERGNRKSRIGVVVSNKMTKTVVVKVERRVADPKYGKIVTKAEKYKAHDEDQACQIGDRVRIVETRPISKDKRWRVAETIEKAEA</sequence>
<gene>
    <name evidence="1" type="primary">rpsQ</name>
    <name type="ordered locus">A2cp1_2027</name>
</gene>
<keyword id="KW-0687">Ribonucleoprotein</keyword>
<keyword id="KW-0689">Ribosomal protein</keyword>
<keyword id="KW-0694">RNA-binding</keyword>
<keyword id="KW-0699">rRNA-binding</keyword>
<name>RS17_ANAD2</name>
<accession>B8J869</accession>
<proteinExistence type="inferred from homology"/>
<organism>
    <name type="scientific">Anaeromyxobacter dehalogenans (strain 2CP-1 / ATCC BAA-258)</name>
    <dbReference type="NCBI Taxonomy" id="455488"/>
    <lineage>
        <taxon>Bacteria</taxon>
        <taxon>Pseudomonadati</taxon>
        <taxon>Myxococcota</taxon>
        <taxon>Myxococcia</taxon>
        <taxon>Myxococcales</taxon>
        <taxon>Cystobacterineae</taxon>
        <taxon>Anaeromyxobacteraceae</taxon>
        <taxon>Anaeromyxobacter</taxon>
    </lineage>
</organism>
<evidence type="ECO:0000255" key="1">
    <source>
        <dbReference type="HAMAP-Rule" id="MF_01345"/>
    </source>
</evidence>
<evidence type="ECO:0000305" key="2"/>
<protein>
    <recommendedName>
        <fullName evidence="1">Small ribosomal subunit protein uS17</fullName>
    </recommendedName>
    <alternativeName>
        <fullName evidence="2">30S ribosomal protein S17</fullName>
    </alternativeName>
</protein>
<comment type="function">
    <text evidence="1">One of the primary rRNA binding proteins, it binds specifically to the 5'-end of 16S ribosomal RNA.</text>
</comment>
<comment type="subunit">
    <text evidence="1">Part of the 30S ribosomal subunit.</text>
</comment>
<comment type="similarity">
    <text evidence="1">Belongs to the universal ribosomal protein uS17 family.</text>
</comment>
<dbReference type="EMBL" id="CP001359">
    <property type="protein sequence ID" value="ACL65368.1"/>
    <property type="molecule type" value="Genomic_DNA"/>
</dbReference>
<dbReference type="RefSeq" id="WP_011420991.1">
    <property type="nucleotide sequence ID" value="NC_011891.1"/>
</dbReference>
<dbReference type="SMR" id="B8J869"/>
<dbReference type="KEGG" id="acp:A2cp1_2027"/>
<dbReference type="HOGENOM" id="CLU_073626_1_0_7"/>
<dbReference type="Proteomes" id="UP000007089">
    <property type="component" value="Chromosome"/>
</dbReference>
<dbReference type="GO" id="GO:0022627">
    <property type="term" value="C:cytosolic small ribosomal subunit"/>
    <property type="evidence" value="ECO:0007669"/>
    <property type="project" value="TreeGrafter"/>
</dbReference>
<dbReference type="GO" id="GO:0019843">
    <property type="term" value="F:rRNA binding"/>
    <property type="evidence" value="ECO:0007669"/>
    <property type="project" value="UniProtKB-UniRule"/>
</dbReference>
<dbReference type="GO" id="GO:0003735">
    <property type="term" value="F:structural constituent of ribosome"/>
    <property type="evidence" value="ECO:0007669"/>
    <property type="project" value="InterPro"/>
</dbReference>
<dbReference type="GO" id="GO:0006412">
    <property type="term" value="P:translation"/>
    <property type="evidence" value="ECO:0007669"/>
    <property type="project" value="UniProtKB-UniRule"/>
</dbReference>
<dbReference type="CDD" id="cd00364">
    <property type="entry name" value="Ribosomal_uS17"/>
    <property type="match status" value="1"/>
</dbReference>
<dbReference type="Gene3D" id="2.40.50.140">
    <property type="entry name" value="Nucleic acid-binding proteins"/>
    <property type="match status" value="1"/>
</dbReference>
<dbReference type="HAMAP" id="MF_01345_B">
    <property type="entry name" value="Ribosomal_uS17_B"/>
    <property type="match status" value="1"/>
</dbReference>
<dbReference type="InterPro" id="IPR012340">
    <property type="entry name" value="NA-bd_OB-fold"/>
</dbReference>
<dbReference type="InterPro" id="IPR000266">
    <property type="entry name" value="Ribosomal_uS17"/>
</dbReference>
<dbReference type="InterPro" id="IPR019984">
    <property type="entry name" value="Ribosomal_uS17_bact/chlr"/>
</dbReference>
<dbReference type="InterPro" id="IPR019979">
    <property type="entry name" value="Ribosomal_uS17_CS"/>
</dbReference>
<dbReference type="NCBIfam" id="NF004123">
    <property type="entry name" value="PRK05610.1"/>
    <property type="match status" value="1"/>
</dbReference>
<dbReference type="NCBIfam" id="TIGR03635">
    <property type="entry name" value="uS17_bact"/>
    <property type="match status" value="1"/>
</dbReference>
<dbReference type="PANTHER" id="PTHR10744">
    <property type="entry name" value="40S RIBOSOMAL PROTEIN S11 FAMILY MEMBER"/>
    <property type="match status" value="1"/>
</dbReference>
<dbReference type="PANTHER" id="PTHR10744:SF1">
    <property type="entry name" value="SMALL RIBOSOMAL SUBUNIT PROTEIN US17M"/>
    <property type="match status" value="1"/>
</dbReference>
<dbReference type="Pfam" id="PF00366">
    <property type="entry name" value="Ribosomal_S17"/>
    <property type="match status" value="1"/>
</dbReference>
<dbReference type="PRINTS" id="PR00973">
    <property type="entry name" value="RIBOSOMALS17"/>
</dbReference>
<dbReference type="SUPFAM" id="SSF50249">
    <property type="entry name" value="Nucleic acid-binding proteins"/>
    <property type="match status" value="1"/>
</dbReference>
<dbReference type="PROSITE" id="PS00056">
    <property type="entry name" value="RIBOSOMAL_S17"/>
    <property type="match status" value="1"/>
</dbReference>
<reference key="1">
    <citation type="submission" date="2009-01" db="EMBL/GenBank/DDBJ databases">
        <title>Complete sequence of Anaeromyxobacter dehalogenans 2CP-1.</title>
        <authorList>
            <person name="Lucas S."/>
            <person name="Copeland A."/>
            <person name="Lapidus A."/>
            <person name="Glavina del Rio T."/>
            <person name="Dalin E."/>
            <person name="Tice H."/>
            <person name="Bruce D."/>
            <person name="Goodwin L."/>
            <person name="Pitluck S."/>
            <person name="Saunders E."/>
            <person name="Brettin T."/>
            <person name="Detter J.C."/>
            <person name="Han C."/>
            <person name="Larimer F."/>
            <person name="Land M."/>
            <person name="Hauser L."/>
            <person name="Kyrpides N."/>
            <person name="Ovchinnikova G."/>
            <person name="Beliaev A.S."/>
            <person name="Richardson P."/>
        </authorList>
    </citation>
    <scope>NUCLEOTIDE SEQUENCE [LARGE SCALE GENOMIC DNA]</scope>
    <source>
        <strain>2CP-1 / ATCC BAA-258</strain>
    </source>
</reference>
<feature type="chain" id="PRO_1000166455" description="Small ribosomal subunit protein uS17">
    <location>
        <begin position="1"/>
        <end position="85"/>
    </location>
</feature>